<organism>
    <name type="scientific">Influenza A virus (strain A/Turkey/Minnesota/501/1978 H6N8)</name>
    <dbReference type="NCBI Taxonomy" id="387259"/>
    <lineage>
        <taxon>Viruses</taxon>
        <taxon>Riboviria</taxon>
        <taxon>Orthornavirae</taxon>
        <taxon>Negarnaviricota</taxon>
        <taxon>Polyploviricotina</taxon>
        <taxon>Insthoviricetes</taxon>
        <taxon>Articulavirales</taxon>
        <taxon>Orthomyxoviridae</taxon>
        <taxon>Alphainfluenzavirus</taxon>
        <taxon>Alphainfluenzavirus influenzae</taxon>
        <taxon>Influenza A virus</taxon>
    </lineage>
</organism>
<protein>
    <recommendedName>
        <fullName>Protein PA-X</fullName>
    </recommendedName>
</protein>
<evidence type="ECO:0000250" key="1">
    <source>
        <dbReference type="UniProtKB" id="P0CK64"/>
    </source>
</evidence>
<evidence type="ECO:0000250" key="2">
    <source>
        <dbReference type="UniProtKB" id="P0CK68"/>
    </source>
</evidence>
<evidence type="ECO:0000250" key="3">
    <source>
        <dbReference type="UniProtKB" id="P0DJW8"/>
    </source>
</evidence>
<evidence type="ECO:0000250" key="4">
    <source>
        <dbReference type="UniProtKB" id="P0DXO5"/>
    </source>
</evidence>
<evidence type="ECO:0000305" key="5"/>
<organismHost>
    <name type="scientific">Aves</name>
    <dbReference type="NCBI Taxonomy" id="8782"/>
</organismHost>
<comment type="function">
    <text evidence="1 4">Plays a major role in the shutoff of the host protein expression by cleaving mRNAs probably via an endonuclease activity. This host shutoff allows the virus to escape from the host antiviral response (By similarity). Hijacks host RNA splicing machinery to selectively target host RNAs containing introns for destruction. This may explain the preferential degradation of RNAs that have undergone co- or post-transcriptional processing (By similarity).</text>
</comment>
<comment type="subcellular location">
    <subcellularLocation>
        <location evidence="4">Host cytoplasm</location>
    </subcellularLocation>
    <subcellularLocation>
        <location evidence="4">Host nucleus</location>
    </subcellularLocation>
</comment>
<comment type="alternative products">
    <event type="ribosomal frameshifting"/>
    <isoform>
        <id>P0DJV6-1</id>
        <name>PA-X</name>
        <sequence type="displayed"/>
    </isoform>
    <isoform>
        <id>Q0A3Q2-1</id>
        <name>PA</name>
        <sequence type="external"/>
    </isoform>
</comment>
<comment type="domain">
    <text evidence="1 4">The probable endonuclease active site in the N-terminus and the basic amino acid cluster in the C-terminus are important for the shutoff activity. The C-terminus acts as a nuclear localization signal (By similarity). The C-terminus is recruited to host protein complexes involved in nuclear Pol II RNA processing (By similarity).</text>
</comment>
<comment type="similarity">
    <text evidence="5">Belongs to the influenza viruses PA-X family.</text>
</comment>
<keyword id="KW-1132">Decay of host mRNAs by virus</keyword>
<keyword id="KW-1262">Eukaryotic host gene expression shutoff by virus</keyword>
<keyword id="KW-1035">Host cytoplasm</keyword>
<keyword id="KW-1190">Host gene expression shutoff by virus</keyword>
<keyword id="KW-1192">Host mRNA suppression by virus</keyword>
<keyword id="KW-1048">Host nucleus</keyword>
<keyword id="KW-0945">Host-virus interaction</keyword>
<keyword id="KW-0688">Ribosomal frameshifting</keyword>
<sequence>MEDFVRQCFNPMIVELAEKAMKEYGEDPKIETNKFAAICTHLEVCFMYSDFHFIDERGESIIVESGDPNALLKHRFEIIEGRDRTMAWTVINSICNTTGVEKPKFLPDLYDYKENRFIEIGVTRREVHIYYLEKANKIKSEKTHIHIFSFTGEEMATKADYTLDDESRARIKTRLFTIRQEMASRGLWDSFVSPREAKRQLKKDLKLQEPCAGSPTKVSHRTSPALKTLEPMWMDSNRTAALRASFLKCPKK</sequence>
<proteinExistence type="inferred from homology"/>
<accession>P0DJV6</accession>
<gene>
    <name type="primary">PA</name>
</gene>
<reference key="1">
    <citation type="journal article" date="2006" name="Science">
        <title>Large-scale sequence analysis of avian influenza isolates.</title>
        <authorList>
            <person name="Obenauer J.C."/>
            <person name="Denson J."/>
            <person name="Mehta P.K."/>
            <person name="Su X."/>
            <person name="Mukatira S."/>
            <person name="Finkelstein D.B."/>
            <person name="Xu X."/>
            <person name="Wang J."/>
            <person name="Ma J."/>
            <person name="Fan Y."/>
            <person name="Rakestraw K.M."/>
            <person name="Webster R.G."/>
            <person name="Hoffmann E."/>
            <person name="Krauss S."/>
            <person name="Zheng J."/>
            <person name="Zhang Z."/>
            <person name="Naeve C.W."/>
        </authorList>
    </citation>
    <scope>NUCLEOTIDE SEQUENCE [GENOMIC RNA]</scope>
</reference>
<dbReference type="EMBL" id="CY014776">
    <property type="status" value="NOT_ANNOTATED_CDS"/>
    <property type="molecule type" value="Genomic_RNA"/>
</dbReference>
<dbReference type="SMR" id="P0DJV6"/>
<dbReference type="GO" id="GO:0003723">
    <property type="term" value="F:RNA binding"/>
    <property type="evidence" value="ECO:0007669"/>
    <property type="project" value="InterPro"/>
</dbReference>
<dbReference type="GO" id="GO:0039694">
    <property type="term" value="P:viral RNA genome replication"/>
    <property type="evidence" value="ECO:0007669"/>
    <property type="project" value="InterPro"/>
</dbReference>
<dbReference type="GO" id="GO:0075523">
    <property type="term" value="P:viral translational frameshifting"/>
    <property type="evidence" value="ECO:0007669"/>
    <property type="project" value="UniProtKB-KW"/>
</dbReference>
<dbReference type="FunFam" id="3.40.91.90:FF:000001">
    <property type="entry name" value="Polymerase acidic protein"/>
    <property type="match status" value="1"/>
</dbReference>
<dbReference type="Gene3D" id="3.40.91.90">
    <property type="entry name" value="Influenza RNA-dependent RNA polymerase subunit PA, endonuclease domain"/>
    <property type="match status" value="1"/>
</dbReference>
<dbReference type="InterPro" id="IPR001009">
    <property type="entry name" value="PA/PA-X"/>
</dbReference>
<dbReference type="InterPro" id="IPR038372">
    <property type="entry name" value="PA/PA-X_sf"/>
</dbReference>
<dbReference type="Pfam" id="PF00603">
    <property type="entry name" value="Flu_PA"/>
    <property type="match status" value="1"/>
</dbReference>
<feature type="chain" id="PRO_0000419419" description="Protein PA-X">
    <location>
        <begin position="1"/>
        <end position="252"/>
    </location>
</feature>
<feature type="active site" evidence="2">
    <location>
        <position position="80"/>
    </location>
</feature>
<feature type="active site" evidence="2">
    <location>
        <position position="108"/>
    </location>
</feature>
<feature type="site" description="Important for efficient shutoff activity and nuclear localization" evidence="4">
    <location>
        <position position="195"/>
    </location>
</feature>
<feature type="site" description="Important for efficient shutoff activity and nuclear localization" evidence="4">
    <location>
        <position position="198"/>
    </location>
</feature>
<feature type="site" description="Important for efficient shutoff activity and nuclear localization" evidence="4">
    <location>
        <position position="199"/>
    </location>
</feature>
<feature type="site" description="Important for efficient shutoff activity" evidence="3">
    <location>
        <position position="202"/>
    </location>
</feature>
<feature type="site" description="Important for efficient shutoff activity" evidence="3">
    <location>
        <position position="203"/>
    </location>
</feature>
<feature type="site" description="Important for efficient shutoff activity" evidence="3">
    <location>
        <position position="206"/>
    </location>
</feature>
<name>PAX_I78AC</name>